<organism>
    <name type="scientific">Yersinia pseudotuberculosis serotype IB (strain PB1/+)</name>
    <dbReference type="NCBI Taxonomy" id="502801"/>
    <lineage>
        <taxon>Bacteria</taxon>
        <taxon>Pseudomonadati</taxon>
        <taxon>Pseudomonadota</taxon>
        <taxon>Gammaproteobacteria</taxon>
        <taxon>Enterobacterales</taxon>
        <taxon>Yersiniaceae</taxon>
        <taxon>Yersinia</taxon>
    </lineage>
</organism>
<proteinExistence type="inferred from homology"/>
<feature type="chain" id="PRO_1000093745" description="Methionine--tRNA ligase">
    <location>
        <begin position="1"/>
        <end position="675"/>
    </location>
</feature>
<feature type="domain" description="tRNA-binding" evidence="1">
    <location>
        <begin position="573"/>
        <end position="675"/>
    </location>
</feature>
<feature type="short sequence motif" description="'HIGH' region">
    <location>
        <begin position="15"/>
        <end position="25"/>
    </location>
</feature>
<feature type="short sequence motif" description="'KMSKS' region">
    <location>
        <begin position="332"/>
        <end position="336"/>
    </location>
</feature>
<feature type="binding site" evidence="1">
    <location>
        <position position="146"/>
    </location>
    <ligand>
        <name>Zn(2+)</name>
        <dbReference type="ChEBI" id="CHEBI:29105"/>
    </ligand>
</feature>
<feature type="binding site" evidence="1">
    <location>
        <position position="149"/>
    </location>
    <ligand>
        <name>Zn(2+)</name>
        <dbReference type="ChEBI" id="CHEBI:29105"/>
    </ligand>
</feature>
<feature type="binding site" evidence="1">
    <location>
        <position position="159"/>
    </location>
    <ligand>
        <name>Zn(2+)</name>
        <dbReference type="ChEBI" id="CHEBI:29105"/>
    </ligand>
</feature>
<feature type="binding site" evidence="1">
    <location>
        <position position="162"/>
    </location>
    <ligand>
        <name>Zn(2+)</name>
        <dbReference type="ChEBI" id="CHEBI:29105"/>
    </ligand>
</feature>
<feature type="binding site" evidence="1">
    <location>
        <position position="335"/>
    </location>
    <ligand>
        <name>ATP</name>
        <dbReference type="ChEBI" id="CHEBI:30616"/>
    </ligand>
</feature>
<sequence length="675" mass="75650">MAQVAKKILVTCALPYANGSIHLGHMLEHIQADIWVRFQRMRGNQVHFICADDAHGTPIMLKAQQMGIEPEQMIAEMSQEHQQDFAGFAISYDNYHSTHSDENRELSSLIYGRLKANGYIKNRTISQLYDPEKGMFLPDRFVKGTCPKCKAPEQYGDNCEVCGATYSPTELIDPKSAVSGATPVMRESEHFFFDLPAFSDMLQAWTRSGALQEQVANKMQEWFDSGLQQWDITRDAPYFGFEVPDAPGKYFYVWLDAPIGYMGAFKNLCDKRGDLDFDEFWGKDAKTDLYHFIGKDIVYFHSLFWPAMLEGSNFRKPTNLFVHGYVTVNGAKMSKSRGTFIKAGTYLKYLDADCLRYYYAAKLSSRIDDIDLNLEDFVQRVNADIVNKVVNLASRNAGFINKRFAGQLADQLADPVLYKTFTDAATSIADAYNNRESGKAIREIMALADVANRYVDEQAPWVVAKQEGRDADLHAICSMGINLFRVLMTYLKPVLPSLTERTEAFLNTELTWDSIEQPLLGHSITAFKALFNRIDLDKVNEMVASSKEDMAPATRVTGPLADDPIQETISFDDFAKVDMRIALIQQAEFVEGSDKLLKLTLELGGETRQIFSGIRSAYPDPKALEGRMTVMVANLAPRKMRFGVSEGMVMAAGPGGSDIFLLSPDSGAQPGMQVK</sequence>
<dbReference type="EC" id="6.1.1.10" evidence="1"/>
<dbReference type="EMBL" id="CP001048">
    <property type="protein sequence ID" value="ACC88613.1"/>
    <property type="molecule type" value="Genomic_DNA"/>
</dbReference>
<dbReference type="RefSeq" id="WP_012413632.1">
    <property type="nucleotide sequence ID" value="NZ_CP009780.1"/>
</dbReference>
<dbReference type="SMR" id="B2JZK3"/>
<dbReference type="GeneID" id="49786379"/>
<dbReference type="KEGG" id="ypb:YPTS_1644"/>
<dbReference type="PATRIC" id="fig|502801.10.peg.1015"/>
<dbReference type="GO" id="GO:0005829">
    <property type="term" value="C:cytosol"/>
    <property type="evidence" value="ECO:0007669"/>
    <property type="project" value="TreeGrafter"/>
</dbReference>
<dbReference type="GO" id="GO:0005524">
    <property type="term" value="F:ATP binding"/>
    <property type="evidence" value="ECO:0007669"/>
    <property type="project" value="UniProtKB-UniRule"/>
</dbReference>
<dbReference type="GO" id="GO:0046872">
    <property type="term" value="F:metal ion binding"/>
    <property type="evidence" value="ECO:0007669"/>
    <property type="project" value="UniProtKB-KW"/>
</dbReference>
<dbReference type="GO" id="GO:0004825">
    <property type="term" value="F:methionine-tRNA ligase activity"/>
    <property type="evidence" value="ECO:0007669"/>
    <property type="project" value="UniProtKB-UniRule"/>
</dbReference>
<dbReference type="GO" id="GO:0000049">
    <property type="term" value="F:tRNA binding"/>
    <property type="evidence" value="ECO:0007669"/>
    <property type="project" value="UniProtKB-KW"/>
</dbReference>
<dbReference type="GO" id="GO:0006431">
    <property type="term" value="P:methionyl-tRNA aminoacylation"/>
    <property type="evidence" value="ECO:0007669"/>
    <property type="project" value="UniProtKB-UniRule"/>
</dbReference>
<dbReference type="CDD" id="cd07957">
    <property type="entry name" value="Anticodon_Ia_Met"/>
    <property type="match status" value="1"/>
</dbReference>
<dbReference type="CDD" id="cd00814">
    <property type="entry name" value="MetRS_core"/>
    <property type="match status" value="1"/>
</dbReference>
<dbReference type="CDD" id="cd02800">
    <property type="entry name" value="tRNA_bind_EcMetRS_like"/>
    <property type="match status" value="1"/>
</dbReference>
<dbReference type="FunFam" id="1.10.730.10:FF:000005">
    <property type="entry name" value="Methionine--tRNA ligase"/>
    <property type="match status" value="1"/>
</dbReference>
<dbReference type="FunFam" id="2.20.28.20:FF:000001">
    <property type="entry name" value="Methionine--tRNA ligase"/>
    <property type="match status" value="1"/>
</dbReference>
<dbReference type="FunFam" id="2.40.50.140:FF:000042">
    <property type="entry name" value="Methionine--tRNA ligase"/>
    <property type="match status" value="1"/>
</dbReference>
<dbReference type="Gene3D" id="3.40.50.620">
    <property type="entry name" value="HUPs"/>
    <property type="match status" value="1"/>
</dbReference>
<dbReference type="Gene3D" id="1.10.730.10">
    <property type="entry name" value="Isoleucyl-tRNA Synthetase, Domain 1"/>
    <property type="match status" value="1"/>
</dbReference>
<dbReference type="Gene3D" id="2.20.28.20">
    <property type="entry name" value="Methionyl-tRNA synthetase, Zn-domain"/>
    <property type="match status" value="1"/>
</dbReference>
<dbReference type="Gene3D" id="2.40.50.140">
    <property type="entry name" value="Nucleic acid-binding proteins"/>
    <property type="match status" value="1"/>
</dbReference>
<dbReference type="HAMAP" id="MF_00098">
    <property type="entry name" value="Met_tRNA_synth_type1"/>
    <property type="match status" value="1"/>
</dbReference>
<dbReference type="InterPro" id="IPR001412">
    <property type="entry name" value="aa-tRNA-synth_I_CS"/>
</dbReference>
<dbReference type="InterPro" id="IPR041872">
    <property type="entry name" value="Anticodon_Met"/>
</dbReference>
<dbReference type="InterPro" id="IPR004495">
    <property type="entry name" value="Met-tRNA-synth_bsu_C"/>
</dbReference>
<dbReference type="InterPro" id="IPR023458">
    <property type="entry name" value="Met-tRNA_ligase_1"/>
</dbReference>
<dbReference type="InterPro" id="IPR014758">
    <property type="entry name" value="Met-tRNA_synth"/>
</dbReference>
<dbReference type="InterPro" id="IPR015413">
    <property type="entry name" value="Methionyl/Leucyl_tRNA_Synth"/>
</dbReference>
<dbReference type="InterPro" id="IPR033911">
    <property type="entry name" value="MetRS_core"/>
</dbReference>
<dbReference type="InterPro" id="IPR029038">
    <property type="entry name" value="MetRS_Zn"/>
</dbReference>
<dbReference type="InterPro" id="IPR012340">
    <property type="entry name" value="NA-bd_OB-fold"/>
</dbReference>
<dbReference type="InterPro" id="IPR014729">
    <property type="entry name" value="Rossmann-like_a/b/a_fold"/>
</dbReference>
<dbReference type="InterPro" id="IPR002547">
    <property type="entry name" value="tRNA-bd_dom"/>
</dbReference>
<dbReference type="InterPro" id="IPR009080">
    <property type="entry name" value="tRNAsynth_Ia_anticodon-bd"/>
</dbReference>
<dbReference type="NCBIfam" id="TIGR00398">
    <property type="entry name" value="metG"/>
    <property type="match status" value="1"/>
</dbReference>
<dbReference type="NCBIfam" id="TIGR00399">
    <property type="entry name" value="metG_C_term"/>
    <property type="match status" value="1"/>
</dbReference>
<dbReference type="NCBIfam" id="NF001100">
    <property type="entry name" value="PRK00133.1"/>
    <property type="match status" value="1"/>
</dbReference>
<dbReference type="PANTHER" id="PTHR45765">
    <property type="entry name" value="METHIONINE--TRNA LIGASE"/>
    <property type="match status" value="1"/>
</dbReference>
<dbReference type="PANTHER" id="PTHR45765:SF1">
    <property type="entry name" value="METHIONINE--TRNA LIGASE, CYTOPLASMIC"/>
    <property type="match status" value="1"/>
</dbReference>
<dbReference type="Pfam" id="PF19303">
    <property type="entry name" value="Anticodon_3"/>
    <property type="match status" value="1"/>
</dbReference>
<dbReference type="Pfam" id="PF09334">
    <property type="entry name" value="tRNA-synt_1g"/>
    <property type="match status" value="1"/>
</dbReference>
<dbReference type="Pfam" id="PF01588">
    <property type="entry name" value="tRNA_bind"/>
    <property type="match status" value="1"/>
</dbReference>
<dbReference type="PRINTS" id="PR01041">
    <property type="entry name" value="TRNASYNTHMET"/>
</dbReference>
<dbReference type="SUPFAM" id="SSF47323">
    <property type="entry name" value="Anticodon-binding domain of a subclass of class I aminoacyl-tRNA synthetases"/>
    <property type="match status" value="1"/>
</dbReference>
<dbReference type="SUPFAM" id="SSF57770">
    <property type="entry name" value="Methionyl-tRNA synthetase (MetRS), Zn-domain"/>
    <property type="match status" value="1"/>
</dbReference>
<dbReference type="SUPFAM" id="SSF50249">
    <property type="entry name" value="Nucleic acid-binding proteins"/>
    <property type="match status" value="1"/>
</dbReference>
<dbReference type="SUPFAM" id="SSF52374">
    <property type="entry name" value="Nucleotidylyl transferase"/>
    <property type="match status" value="1"/>
</dbReference>
<dbReference type="PROSITE" id="PS00178">
    <property type="entry name" value="AA_TRNA_LIGASE_I"/>
    <property type="match status" value="1"/>
</dbReference>
<dbReference type="PROSITE" id="PS50886">
    <property type="entry name" value="TRBD"/>
    <property type="match status" value="1"/>
</dbReference>
<name>SYM_YERPB</name>
<comment type="function">
    <text evidence="1">Is required not only for elongation of protein synthesis but also for the initiation of all mRNA translation through initiator tRNA(fMet) aminoacylation.</text>
</comment>
<comment type="catalytic activity">
    <reaction evidence="1">
        <text>tRNA(Met) + L-methionine + ATP = L-methionyl-tRNA(Met) + AMP + diphosphate</text>
        <dbReference type="Rhea" id="RHEA:13481"/>
        <dbReference type="Rhea" id="RHEA-COMP:9667"/>
        <dbReference type="Rhea" id="RHEA-COMP:9698"/>
        <dbReference type="ChEBI" id="CHEBI:30616"/>
        <dbReference type="ChEBI" id="CHEBI:33019"/>
        <dbReference type="ChEBI" id="CHEBI:57844"/>
        <dbReference type="ChEBI" id="CHEBI:78442"/>
        <dbReference type="ChEBI" id="CHEBI:78530"/>
        <dbReference type="ChEBI" id="CHEBI:456215"/>
        <dbReference type="EC" id="6.1.1.10"/>
    </reaction>
</comment>
<comment type="cofactor">
    <cofactor evidence="1">
        <name>Zn(2+)</name>
        <dbReference type="ChEBI" id="CHEBI:29105"/>
    </cofactor>
    <text evidence="1">Binds 1 zinc ion per subunit.</text>
</comment>
<comment type="subunit">
    <text evidence="1">Homodimer.</text>
</comment>
<comment type="subcellular location">
    <subcellularLocation>
        <location evidence="1">Cytoplasm</location>
    </subcellularLocation>
</comment>
<comment type="similarity">
    <text evidence="1">Belongs to the class-I aminoacyl-tRNA synthetase family. MetG type 1 subfamily.</text>
</comment>
<evidence type="ECO:0000255" key="1">
    <source>
        <dbReference type="HAMAP-Rule" id="MF_00098"/>
    </source>
</evidence>
<keyword id="KW-0030">Aminoacyl-tRNA synthetase</keyword>
<keyword id="KW-0067">ATP-binding</keyword>
<keyword id="KW-0963">Cytoplasm</keyword>
<keyword id="KW-0436">Ligase</keyword>
<keyword id="KW-0479">Metal-binding</keyword>
<keyword id="KW-0547">Nucleotide-binding</keyword>
<keyword id="KW-0648">Protein biosynthesis</keyword>
<keyword id="KW-0694">RNA-binding</keyword>
<keyword id="KW-0820">tRNA-binding</keyword>
<keyword id="KW-0862">Zinc</keyword>
<accession>B2JZK3</accession>
<gene>
    <name evidence="1" type="primary">metG</name>
    <name type="ordered locus">YPTS_1644</name>
</gene>
<protein>
    <recommendedName>
        <fullName evidence="1">Methionine--tRNA ligase</fullName>
        <ecNumber evidence="1">6.1.1.10</ecNumber>
    </recommendedName>
    <alternativeName>
        <fullName evidence="1">Methionyl-tRNA synthetase</fullName>
        <shortName evidence="1">MetRS</shortName>
    </alternativeName>
</protein>
<reference key="1">
    <citation type="submission" date="2008-04" db="EMBL/GenBank/DDBJ databases">
        <title>Complete sequence of Yersinia pseudotuberculosis PB1/+.</title>
        <authorList>
            <person name="Copeland A."/>
            <person name="Lucas S."/>
            <person name="Lapidus A."/>
            <person name="Glavina del Rio T."/>
            <person name="Dalin E."/>
            <person name="Tice H."/>
            <person name="Bruce D."/>
            <person name="Goodwin L."/>
            <person name="Pitluck S."/>
            <person name="Munk A.C."/>
            <person name="Brettin T."/>
            <person name="Detter J.C."/>
            <person name="Han C."/>
            <person name="Tapia R."/>
            <person name="Schmutz J."/>
            <person name="Larimer F."/>
            <person name="Land M."/>
            <person name="Hauser L."/>
            <person name="Challacombe J.F."/>
            <person name="Green L."/>
            <person name="Lindler L.E."/>
            <person name="Nikolich M.P."/>
            <person name="Richardson P."/>
        </authorList>
    </citation>
    <scope>NUCLEOTIDE SEQUENCE [LARGE SCALE GENOMIC DNA]</scope>
    <source>
        <strain>PB1/+</strain>
    </source>
</reference>